<gene>
    <name type="primary">TCEA3</name>
</gene>
<accession>Q2KI09</accession>
<reference key="1">
    <citation type="submission" date="2006-01" db="EMBL/GenBank/DDBJ databases">
        <authorList>
            <consortium name="NIH - Mammalian Gene Collection (MGC) project"/>
        </authorList>
    </citation>
    <scope>NUCLEOTIDE SEQUENCE [LARGE SCALE MRNA]</scope>
    <source>
        <strain>Hereford</strain>
        <tissue>Heart ventricle</tissue>
    </source>
</reference>
<feature type="chain" id="PRO_0000285504" description="Transcription elongation factor A protein 3">
    <location>
        <begin position="1"/>
        <end position="349"/>
    </location>
</feature>
<feature type="domain" description="TFIIS N-terminal" evidence="4">
    <location>
        <begin position="5"/>
        <end position="82"/>
    </location>
</feature>
<feature type="domain" description="TFIIS central" evidence="5">
    <location>
        <begin position="188"/>
        <end position="304"/>
    </location>
</feature>
<feature type="zinc finger region" description="TFIIS-type" evidence="3">
    <location>
        <begin position="307"/>
        <end position="347"/>
    </location>
</feature>
<feature type="region of interest" description="Disordered" evidence="6">
    <location>
        <begin position="80"/>
        <end position="170"/>
    </location>
</feature>
<feature type="compositionally biased region" description="Basic and acidic residues" evidence="6">
    <location>
        <begin position="101"/>
        <end position="110"/>
    </location>
</feature>
<feature type="compositionally biased region" description="Basic and acidic residues" evidence="6">
    <location>
        <begin position="121"/>
        <end position="133"/>
    </location>
</feature>
<feature type="compositionally biased region" description="Low complexity" evidence="6">
    <location>
        <begin position="134"/>
        <end position="144"/>
    </location>
</feature>
<feature type="compositionally biased region" description="Low complexity" evidence="6">
    <location>
        <begin position="160"/>
        <end position="170"/>
    </location>
</feature>
<feature type="binding site" evidence="3">
    <location>
        <position position="311"/>
    </location>
    <ligand>
        <name>Zn(2+)</name>
        <dbReference type="ChEBI" id="CHEBI:29105"/>
    </ligand>
</feature>
<feature type="binding site" evidence="3">
    <location>
        <position position="314"/>
    </location>
    <ligand>
        <name>Zn(2+)</name>
        <dbReference type="ChEBI" id="CHEBI:29105"/>
    </ligand>
</feature>
<feature type="binding site" evidence="3">
    <location>
        <position position="339"/>
    </location>
    <ligand>
        <name>Zn(2+)</name>
        <dbReference type="ChEBI" id="CHEBI:29105"/>
    </ligand>
</feature>
<feature type="binding site" evidence="3">
    <location>
        <position position="342"/>
    </location>
    <ligand>
        <name>Zn(2+)</name>
        <dbReference type="ChEBI" id="CHEBI:29105"/>
    </ligand>
</feature>
<feature type="modified residue" description="Phosphoserine" evidence="2">
    <location>
        <position position="115"/>
    </location>
</feature>
<feature type="modified residue" description="Phosphoserine" evidence="2">
    <location>
        <position position="141"/>
    </location>
</feature>
<sequence>MGQEEELLRIAKKLEKMVARKKTEGALDLLKKLGSWQMSIQLLQTTRIGVAVNGVRKHCSNKEVVALAKVLIRNWKQLLDSPATPKGEKGEERVKAKKKEKGLDCSDWKPETSLSPPRKKRVEEPKDRRDSVDSKSSATSSPKRPSMERSNSSKSKAETPRTPSSPSSPTFAPSVCLLAPCYLTGDSVRDKCVEMLSAALKADDDYKDYGVNCDKMASEIEDHIYQELKSTDMKYRNRVRSRISNLKDPRNPGLRRNVLSGAISAGLIAKMTAEEMASDELRELRNAMTQEAIREHQMAKTGGTTTDLFQCSKCKKKNCTYNQVQTRSADEPMTTFVLCNECGNRWKFC</sequence>
<proteinExistence type="evidence at transcript level"/>
<evidence type="ECO:0000250" key="1"/>
<evidence type="ECO:0000250" key="2">
    <source>
        <dbReference type="UniProtKB" id="O75764"/>
    </source>
</evidence>
<evidence type="ECO:0000255" key="3">
    <source>
        <dbReference type="PROSITE-ProRule" id="PRU00472"/>
    </source>
</evidence>
<evidence type="ECO:0000255" key="4">
    <source>
        <dbReference type="PROSITE-ProRule" id="PRU00649"/>
    </source>
</evidence>
<evidence type="ECO:0000255" key="5">
    <source>
        <dbReference type="PROSITE-ProRule" id="PRU00651"/>
    </source>
</evidence>
<evidence type="ECO:0000256" key="6">
    <source>
        <dbReference type="SAM" id="MobiDB-lite"/>
    </source>
</evidence>
<evidence type="ECO:0000305" key="7"/>
<dbReference type="EMBL" id="BC112812">
    <property type="protein sequence ID" value="AAI12813.1"/>
    <property type="molecule type" value="mRNA"/>
</dbReference>
<dbReference type="RefSeq" id="NP_001039825.1">
    <property type="nucleotide sequence ID" value="NM_001046360.1"/>
</dbReference>
<dbReference type="RefSeq" id="XP_059731182.1">
    <property type="nucleotide sequence ID" value="XM_059875199.1"/>
</dbReference>
<dbReference type="SMR" id="Q2KI09"/>
<dbReference type="FunCoup" id="Q2KI09">
    <property type="interactions" value="1039"/>
</dbReference>
<dbReference type="STRING" id="9913.ENSBTAP00000068352"/>
<dbReference type="PaxDb" id="9913-ENSBTAP00000004501"/>
<dbReference type="GeneID" id="533803"/>
<dbReference type="KEGG" id="bta:533803"/>
<dbReference type="CTD" id="6920"/>
<dbReference type="eggNOG" id="KOG1105">
    <property type="taxonomic scope" value="Eukaryota"/>
</dbReference>
<dbReference type="InParanoid" id="Q2KI09"/>
<dbReference type="OrthoDB" id="44867at2759"/>
<dbReference type="Proteomes" id="UP000009136">
    <property type="component" value="Unplaced"/>
</dbReference>
<dbReference type="GO" id="GO:0005634">
    <property type="term" value="C:nucleus"/>
    <property type="evidence" value="ECO:0000318"/>
    <property type="project" value="GO_Central"/>
</dbReference>
<dbReference type="GO" id="GO:0003677">
    <property type="term" value="F:DNA binding"/>
    <property type="evidence" value="ECO:0007669"/>
    <property type="project" value="UniProtKB-KW"/>
</dbReference>
<dbReference type="GO" id="GO:0008270">
    <property type="term" value="F:zinc ion binding"/>
    <property type="evidence" value="ECO:0007669"/>
    <property type="project" value="UniProtKB-KW"/>
</dbReference>
<dbReference type="GO" id="GO:0006357">
    <property type="term" value="P:regulation of transcription by RNA polymerase II"/>
    <property type="evidence" value="ECO:0000318"/>
    <property type="project" value="GO_Central"/>
</dbReference>
<dbReference type="GO" id="GO:0006368">
    <property type="term" value="P:transcription elongation by RNA polymerase II"/>
    <property type="evidence" value="ECO:0007669"/>
    <property type="project" value="InterPro"/>
</dbReference>
<dbReference type="CDD" id="cd00183">
    <property type="entry name" value="TFIIS_I"/>
    <property type="match status" value="1"/>
</dbReference>
<dbReference type="CDD" id="cd13749">
    <property type="entry name" value="Zn-ribbon_TFIIS"/>
    <property type="match status" value="1"/>
</dbReference>
<dbReference type="FunFam" id="2.20.25.10:FF:000001">
    <property type="entry name" value="Probable Transcription elongation factor S-II"/>
    <property type="match status" value="1"/>
</dbReference>
<dbReference type="FunFam" id="1.20.930.10:FF:000002">
    <property type="entry name" value="Transcription elongation factor A (SII), 1"/>
    <property type="match status" value="1"/>
</dbReference>
<dbReference type="FunFam" id="1.10.472.30:FF:000008">
    <property type="entry name" value="transcription elongation factor S-II"/>
    <property type="match status" value="1"/>
</dbReference>
<dbReference type="Gene3D" id="2.20.25.10">
    <property type="match status" value="1"/>
</dbReference>
<dbReference type="Gene3D" id="1.20.930.10">
    <property type="entry name" value="Conserved domain common to transcription factors TFIIS, elongin A, CRSP70"/>
    <property type="match status" value="1"/>
</dbReference>
<dbReference type="Gene3D" id="1.10.472.30">
    <property type="entry name" value="Transcription elongation factor S-II, central domain"/>
    <property type="match status" value="1"/>
</dbReference>
<dbReference type="InterPro" id="IPR035100">
    <property type="entry name" value="TF_IIS-typ"/>
</dbReference>
<dbReference type="InterPro" id="IPR003617">
    <property type="entry name" value="TFIIS/CRSP70_N_sub"/>
</dbReference>
<dbReference type="InterPro" id="IPR035441">
    <property type="entry name" value="TFIIS/LEDGF_dom_sf"/>
</dbReference>
<dbReference type="InterPro" id="IPR003618">
    <property type="entry name" value="TFIIS_cen_dom"/>
</dbReference>
<dbReference type="InterPro" id="IPR036575">
    <property type="entry name" value="TFIIS_cen_dom_sf"/>
</dbReference>
<dbReference type="InterPro" id="IPR017923">
    <property type="entry name" value="TFIIS_N"/>
</dbReference>
<dbReference type="InterPro" id="IPR006289">
    <property type="entry name" value="TFSII"/>
</dbReference>
<dbReference type="InterPro" id="IPR001222">
    <property type="entry name" value="Znf_TFIIS"/>
</dbReference>
<dbReference type="NCBIfam" id="TIGR01385">
    <property type="entry name" value="TFSII"/>
    <property type="match status" value="1"/>
</dbReference>
<dbReference type="PANTHER" id="PTHR11477:SF4">
    <property type="entry name" value="TRANSCRIPTION ELONGATION FACTOR A PROTEIN 3"/>
    <property type="match status" value="1"/>
</dbReference>
<dbReference type="PANTHER" id="PTHR11477">
    <property type="entry name" value="TRANSCRIPTION FACTOR S-II ZINC FINGER DOMAIN-CONTAINING PROTEIN"/>
    <property type="match status" value="1"/>
</dbReference>
<dbReference type="Pfam" id="PF08711">
    <property type="entry name" value="Med26"/>
    <property type="match status" value="1"/>
</dbReference>
<dbReference type="Pfam" id="PF07500">
    <property type="entry name" value="TFIIS_M"/>
    <property type="match status" value="1"/>
</dbReference>
<dbReference type="Pfam" id="PF01096">
    <property type="entry name" value="Zn_ribbon_TFIIS"/>
    <property type="match status" value="1"/>
</dbReference>
<dbReference type="PIRSF" id="PIRSF006704">
    <property type="entry name" value="TF_IIS"/>
    <property type="match status" value="1"/>
</dbReference>
<dbReference type="SMART" id="SM00510">
    <property type="entry name" value="TFS2M"/>
    <property type="match status" value="1"/>
</dbReference>
<dbReference type="SMART" id="SM00509">
    <property type="entry name" value="TFS2N"/>
    <property type="match status" value="1"/>
</dbReference>
<dbReference type="SMART" id="SM00440">
    <property type="entry name" value="ZnF_C2C2"/>
    <property type="match status" value="1"/>
</dbReference>
<dbReference type="SUPFAM" id="SSF47676">
    <property type="entry name" value="Conserved domain common to transcription factors TFIIS, elongin A, CRSP70"/>
    <property type="match status" value="1"/>
</dbReference>
<dbReference type="SUPFAM" id="SSF46942">
    <property type="entry name" value="Elongation factor TFIIS domain 2"/>
    <property type="match status" value="1"/>
</dbReference>
<dbReference type="SUPFAM" id="SSF57783">
    <property type="entry name" value="Zinc beta-ribbon"/>
    <property type="match status" value="1"/>
</dbReference>
<dbReference type="PROSITE" id="PS51321">
    <property type="entry name" value="TFIIS_CENTRAL"/>
    <property type="match status" value="1"/>
</dbReference>
<dbReference type="PROSITE" id="PS51319">
    <property type="entry name" value="TFIIS_N"/>
    <property type="match status" value="1"/>
</dbReference>
<dbReference type="PROSITE" id="PS00466">
    <property type="entry name" value="ZF_TFIIS_1"/>
    <property type="match status" value="1"/>
</dbReference>
<dbReference type="PROSITE" id="PS51133">
    <property type="entry name" value="ZF_TFIIS_2"/>
    <property type="match status" value="1"/>
</dbReference>
<organism>
    <name type="scientific">Bos taurus</name>
    <name type="common">Bovine</name>
    <dbReference type="NCBI Taxonomy" id="9913"/>
    <lineage>
        <taxon>Eukaryota</taxon>
        <taxon>Metazoa</taxon>
        <taxon>Chordata</taxon>
        <taxon>Craniata</taxon>
        <taxon>Vertebrata</taxon>
        <taxon>Euteleostomi</taxon>
        <taxon>Mammalia</taxon>
        <taxon>Eutheria</taxon>
        <taxon>Laurasiatheria</taxon>
        <taxon>Artiodactyla</taxon>
        <taxon>Ruminantia</taxon>
        <taxon>Pecora</taxon>
        <taxon>Bovidae</taxon>
        <taxon>Bovinae</taxon>
        <taxon>Bos</taxon>
    </lineage>
</organism>
<protein>
    <recommendedName>
        <fullName>Transcription elongation factor A protein 3</fullName>
    </recommendedName>
    <alternativeName>
        <fullName>Transcription elongation factor S-II protein 3</fullName>
    </alternativeName>
</protein>
<keyword id="KW-0238">DNA-binding</keyword>
<keyword id="KW-0479">Metal-binding</keyword>
<keyword id="KW-0539">Nucleus</keyword>
<keyword id="KW-0597">Phosphoprotein</keyword>
<keyword id="KW-1185">Reference proteome</keyword>
<keyword id="KW-0804">Transcription</keyword>
<keyword id="KW-0805">Transcription regulation</keyword>
<keyword id="KW-0862">Zinc</keyword>
<keyword id="KW-0863">Zinc-finger</keyword>
<comment type="function">
    <text evidence="1">Necessary for efficient RNA polymerase II transcription elongation past template-encoded arresting sites. The arresting sites in DNA have the property of trapping a certain fraction of elongating RNA polymerases that pass through, resulting in locked ternary complexes. Cleavage of the nascent transcript by S-II allows the resumption of elongation from the new 3'-terminus (By similarity).</text>
</comment>
<comment type="subcellular location">
    <subcellularLocation>
        <location evidence="4 5">Nucleus</location>
    </subcellularLocation>
</comment>
<comment type="similarity">
    <text evidence="7">Belongs to the TFS-II family.</text>
</comment>
<name>TCEA3_BOVIN</name>